<protein>
    <recommendedName>
        <fullName evidence="1">Large ribosomal subunit protein uL23</fullName>
    </recommendedName>
    <alternativeName>
        <fullName evidence="2">50S ribosomal protein L23</fullName>
    </alternativeName>
</protein>
<accession>B4SKW5</accession>
<evidence type="ECO:0000255" key="1">
    <source>
        <dbReference type="HAMAP-Rule" id="MF_01369"/>
    </source>
</evidence>
<evidence type="ECO:0000305" key="2"/>
<organism>
    <name type="scientific">Stenotrophomonas maltophilia (strain R551-3)</name>
    <dbReference type="NCBI Taxonomy" id="391008"/>
    <lineage>
        <taxon>Bacteria</taxon>
        <taxon>Pseudomonadati</taxon>
        <taxon>Pseudomonadota</taxon>
        <taxon>Gammaproteobacteria</taxon>
        <taxon>Lysobacterales</taxon>
        <taxon>Lysobacteraceae</taxon>
        <taxon>Stenotrophomonas</taxon>
        <taxon>Stenotrophomonas maltophilia group</taxon>
    </lineage>
</organism>
<dbReference type="EMBL" id="CP001111">
    <property type="protein sequence ID" value="ACF50463.1"/>
    <property type="molecule type" value="Genomic_DNA"/>
</dbReference>
<dbReference type="RefSeq" id="WP_004145338.1">
    <property type="nucleotide sequence ID" value="NC_011071.1"/>
</dbReference>
<dbReference type="SMR" id="B4SKW5"/>
<dbReference type="STRING" id="391008.Smal_0758"/>
<dbReference type="GeneID" id="97259936"/>
<dbReference type="KEGG" id="smt:Smal_0758"/>
<dbReference type="eggNOG" id="COG0089">
    <property type="taxonomic scope" value="Bacteria"/>
</dbReference>
<dbReference type="HOGENOM" id="CLU_037562_3_1_6"/>
<dbReference type="OrthoDB" id="9793353at2"/>
<dbReference type="Proteomes" id="UP000001867">
    <property type="component" value="Chromosome"/>
</dbReference>
<dbReference type="GO" id="GO:1990904">
    <property type="term" value="C:ribonucleoprotein complex"/>
    <property type="evidence" value="ECO:0007669"/>
    <property type="project" value="UniProtKB-KW"/>
</dbReference>
<dbReference type="GO" id="GO:0005840">
    <property type="term" value="C:ribosome"/>
    <property type="evidence" value="ECO:0007669"/>
    <property type="project" value="UniProtKB-KW"/>
</dbReference>
<dbReference type="GO" id="GO:0019843">
    <property type="term" value="F:rRNA binding"/>
    <property type="evidence" value="ECO:0007669"/>
    <property type="project" value="UniProtKB-UniRule"/>
</dbReference>
<dbReference type="GO" id="GO:0003735">
    <property type="term" value="F:structural constituent of ribosome"/>
    <property type="evidence" value="ECO:0007669"/>
    <property type="project" value="InterPro"/>
</dbReference>
<dbReference type="GO" id="GO:0006412">
    <property type="term" value="P:translation"/>
    <property type="evidence" value="ECO:0007669"/>
    <property type="project" value="UniProtKB-UniRule"/>
</dbReference>
<dbReference type="FunFam" id="3.30.70.330:FF:000001">
    <property type="entry name" value="50S ribosomal protein L23"/>
    <property type="match status" value="1"/>
</dbReference>
<dbReference type="Gene3D" id="3.30.70.330">
    <property type="match status" value="1"/>
</dbReference>
<dbReference type="HAMAP" id="MF_01369_B">
    <property type="entry name" value="Ribosomal_uL23_B"/>
    <property type="match status" value="1"/>
</dbReference>
<dbReference type="InterPro" id="IPR012677">
    <property type="entry name" value="Nucleotide-bd_a/b_plait_sf"/>
</dbReference>
<dbReference type="InterPro" id="IPR013025">
    <property type="entry name" value="Ribosomal_uL23-like"/>
</dbReference>
<dbReference type="InterPro" id="IPR012678">
    <property type="entry name" value="Ribosomal_uL23/eL15/eS24_sf"/>
</dbReference>
<dbReference type="InterPro" id="IPR001014">
    <property type="entry name" value="Ribosomal_uL23_CS"/>
</dbReference>
<dbReference type="NCBIfam" id="NF004359">
    <property type="entry name" value="PRK05738.1-3"/>
    <property type="match status" value="1"/>
</dbReference>
<dbReference type="NCBIfam" id="NF004363">
    <property type="entry name" value="PRK05738.2-4"/>
    <property type="match status" value="1"/>
</dbReference>
<dbReference type="NCBIfam" id="NF004366">
    <property type="entry name" value="PRK05738.3-2"/>
    <property type="match status" value="1"/>
</dbReference>
<dbReference type="PANTHER" id="PTHR11620">
    <property type="entry name" value="60S RIBOSOMAL PROTEIN L23A"/>
    <property type="match status" value="1"/>
</dbReference>
<dbReference type="Pfam" id="PF00276">
    <property type="entry name" value="Ribosomal_L23"/>
    <property type="match status" value="1"/>
</dbReference>
<dbReference type="SUPFAM" id="SSF54189">
    <property type="entry name" value="Ribosomal proteins S24e, L23 and L15e"/>
    <property type="match status" value="1"/>
</dbReference>
<dbReference type="PROSITE" id="PS00050">
    <property type="entry name" value="RIBOSOMAL_L23"/>
    <property type="match status" value="1"/>
</dbReference>
<reference key="1">
    <citation type="submission" date="2008-06" db="EMBL/GenBank/DDBJ databases">
        <title>Complete sequence of Stenotrophomonas maltophilia R551-3.</title>
        <authorList>
            <consortium name="US DOE Joint Genome Institute"/>
            <person name="Lucas S."/>
            <person name="Copeland A."/>
            <person name="Lapidus A."/>
            <person name="Glavina del Rio T."/>
            <person name="Dalin E."/>
            <person name="Tice H."/>
            <person name="Pitluck S."/>
            <person name="Chain P."/>
            <person name="Malfatti S."/>
            <person name="Shin M."/>
            <person name="Vergez L."/>
            <person name="Lang D."/>
            <person name="Schmutz J."/>
            <person name="Larimer F."/>
            <person name="Land M."/>
            <person name="Hauser L."/>
            <person name="Kyrpides N."/>
            <person name="Mikhailova N."/>
            <person name="Taghavi S."/>
            <person name="Monchy S."/>
            <person name="Newman L."/>
            <person name="Vangronsveld J."/>
            <person name="van der Lelie D."/>
            <person name="Richardson P."/>
        </authorList>
    </citation>
    <scope>NUCLEOTIDE SEQUENCE [LARGE SCALE GENOMIC DNA]</scope>
    <source>
        <strain>R551-3</strain>
    </source>
</reference>
<keyword id="KW-0687">Ribonucleoprotein</keyword>
<keyword id="KW-0689">Ribosomal protein</keyword>
<keyword id="KW-0694">RNA-binding</keyword>
<keyword id="KW-0699">rRNA-binding</keyword>
<comment type="function">
    <text evidence="1">One of the early assembly proteins it binds 23S rRNA. One of the proteins that surrounds the polypeptide exit tunnel on the outside of the ribosome. Forms the main docking site for trigger factor binding to the ribosome.</text>
</comment>
<comment type="subunit">
    <text evidence="1">Part of the 50S ribosomal subunit. Contacts protein L29, and trigger factor when it is bound to the ribosome.</text>
</comment>
<comment type="similarity">
    <text evidence="1">Belongs to the universal ribosomal protein uL23 family.</text>
</comment>
<proteinExistence type="inferred from homology"/>
<name>RL23_STRM5</name>
<sequence>MNSNEKIFSVLRAPRVSEKTARLQELSNQYVFEVSNEATKADVKAAVEQLFDVKVEAVNVVNVKGKNKSFRNRAGRRGDWRKAYVRLADGQSIDVTAKA</sequence>
<gene>
    <name evidence="1" type="primary">rplW</name>
    <name type="ordered locus">Smal_0758</name>
</gene>
<feature type="chain" id="PRO_1000144607" description="Large ribosomal subunit protein uL23">
    <location>
        <begin position="1"/>
        <end position="99"/>
    </location>
</feature>